<gene>
    <name type="ordered locus">AtMg01240</name>
</gene>
<organism>
    <name type="scientific">Arabidopsis thaliana</name>
    <name type="common">Mouse-ear cress</name>
    <dbReference type="NCBI Taxonomy" id="3702"/>
    <lineage>
        <taxon>Eukaryota</taxon>
        <taxon>Viridiplantae</taxon>
        <taxon>Streptophyta</taxon>
        <taxon>Embryophyta</taxon>
        <taxon>Tracheophyta</taxon>
        <taxon>Spermatophyta</taxon>
        <taxon>Magnoliopsida</taxon>
        <taxon>eudicotyledons</taxon>
        <taxon>Gunneridae</taxon>
        <taxon>Pentapetalae</taxon>
        <taxon>rosids</taxon>
        <taxon>malvids</taxon>
        <taxon>Brassicales</taxon>
        <taxon>Brassicaceae</taxon>
        <taxon>Camelineae</taxon>
        <taxon>Arabidopsis</taxon>
    </lineage>
</organism>
<evidence type="ECO:0000305" key="1"/>
<name>M1240_ARATH</name>
<sequence length="100" mass="11012">MSPTLSTGNRDQRGSSRSYAFVSLASHHFTPQGKITITSSLTRKIDPGNFQGQDVVDFSPWVVLPDEDKVAFLISCRVTAKIRKSGLPQLFKTNTSRDIG</sequence>
<keyword id="KW-0496">Mitochondrion</keyword>
<keyword id="KW-1185">Reference proteome</keyword>
<accession>P92554</accession>
<accession>Q1ZXW3</accession>
<protein>
    <recommendedName>
        <fullName>Uncharacterized mitochondrial protein AtMg01240</fullName>
    </recommendedName>
    <alternativeName>
        <fullName>ORF100c</fullName>
    </alternativeName>
</protein>
<proteinExistence type="predicted"/>
<geneLocation type="mitochondrion"/>
<reference key="1">
    <citation type="journal article" date="1997" name="Nat. Genet.">
        <title>The mitochondrial genome of Arabidopsis thaliana contains 57 genes in 366,924 nucleotides.</title>
        <authorList>
            <person name="Unseld M."/>
            <person name="Marienfeld J.R."/>
            <person name="Brandt P."/>
            <person name="Brennicke A."/>
        </authorList>
    </citation>
    <scope>NUCLEOTIDE SEQUENCE [LARGE SCALE GENOMIC DNA]</scope>
    <source>
        <strain>cv. C24</strain>
    </source>
</reference>
<reference key="2">
    <citation type="journal article" date="2018" name="Plant Cell">
        <title>Correction of persistent errors in Arabidopsis reference mitochondrial genomes.</title>
        <authorList>
            <person name="Sloan D.B."/>
            <person name="Wu Z."/>
            <person name="Sharbrough J."/>
        </authorList>
    </citation>
    <scope>NUCLEOTIDE SEQUENCE [LARGE SCALE GENOMIC DNA]</scope>
    <source>
        <strain>cv. Columbia</strain>
    </source>
</reference>
<reference key="3">
    <citation type="journal article" date="1999" name="Nature">
        <title>Sequence and analysis of chromosome 2 of the plant Arabidopsis thaliana.</title>
        <authorList>
            <person name="Lin X."/>
            <person name="Kaul S."/>
            <person name="Rounsley S.D."/>
            <person name="Shea T.P."/>
            <person name="Benito M.-I."/>
            <person name="Town C.D."/>
            <person name="Fujii C.Y."/>
            <person name="Mason T.M."/>
            <person name="Bowman C.L."/>
            <person name="Barnstead M.E."/>
            <person name="Feldblyum T.V."/>
            <person name="Buell C.R."/>
            <person name="Ketchum K.A."/>
            <person name="Lee J.J."/>
            <person name="Ronning C.M."/>
            <person name="Koo H.L."/>
            <person name="Moffat K.S."/>
            <person name="Cronin L.A."/>
            <person name="Shen M."/>
            <person name="Pai G."/>
            <person name="Van Aken S."/>
            <person name="Umayam L."/>
            <person name="Tallon L.J."/>
            <person name="Gill J.E."/>
            <person name="Adams M.D."/>
            <person name="Carrera A.J."/>
            <person name="Creasy T.H."/>
            <person name="Goodman H.M."/>
            <person name="Somerville C.R."/>
            <person name="Copenhaver G.P."/>
            <person name="Preuss D."/>
            <person name="Nierman W.C."/>
            <person name="White O."/>
            <person name="Eisen J.A."/>
            <person name="Salzberg S.L."/>
            <person name="Fraser C.M."/>
            <person name="Venter J.C."/>
        </authorList>
    </citation>
    <scope>NUCLEOTIDE SEQUENCE [LARGE SCALE GENOMIC DNA] (AT2G07697)</scope>
    <source>
        <strain>cv. Columbia</strain>
    </source>
</reference>
<feature type="chain" id="PRO_0000196820" description="Uncharacterized mitochondrial protein AtMg01240">
    <location>
        <begin position="1"/>
        <end position="100"/>
    </location>
</feature>
<comment type="subcellular location">
    <subcellularLocation>
        <location evidence="1">Mitochondrion</location>
    </subcellularLocation>
</comment>
<comment type="miscellaneous">
    <text>A stretch of 270 kb of the mitochondrial genome is duplicated within the centromere of chromosome 2 resulting in the duplication of the gene. The expression of the duplicated gene (At2g07697) is not demonstrated.</text>
</comment>
<comment type="sequence caution" evidence="1">
    <conflict type="frameshift">
        <sequence resource="EMBL" id="AC007730"/>
    </conflict>
</comment>
<dbReference type="EMBL" id="Y08501">
    <property type="protein sequence ID" value="CAA69807.1"/>
    <property type="molecule type" value="Genomic_DNA"/>
</dbReference>
<dbReference type="EMBL" id="BK010421">
    <property type="status" value="NOT_ANNOTATED_CDS"/>
    <property type="molecule type" value="Genomic_DNA"/>
</dbReference>
<dbReference type="EMBL" id="AC007730">
    <property type="status" value="NOT_ANNOTATED_CDS"/>
    <property type="molecule type" value="Genomic_DNA"/>
</dbReference>
<dbReference type="RefSeq" id="NP_085576.1">
    <property type="nucleotide sequence ID" value="NC_001284.2"/>
</dbReference>
<dbReference type="PaxDb" id="3702-ATMG01240.1"/>
<dbReference type="EnsemblPlants" id="ATMG01240.1">
    <property type="protein sequence ID" value="ATMG01240.1"/>
    <property type="gene ID" value="ATMG01240"/>
</dbReference>
<dbReference type="Gramene" id="ATMG01240.1">
    <property type="protein sequence ID" value="ATMG01240.1"/>
    <property type="gene ID" value="ATMG01240"/>
</dbReference>
<dbReference type="Araport" id="ATMG01240"/>
<dbReference type="TAIR" id="ATMG01240">
    <property type="gene designation" value="ORF100C"/>
</dbReference>
<dbReference type="HOGENOM" id="CLU_2309944_0_0_1"/>
<dbReference type="InParanoid" id="P92554"/>
<dbReference type="PRO" id="PR:P92554"/>
<dbReference type="Proteomes" id="UP000006548">
    <property type="component" value="Mitochondrion MT"/>
</dbReference>
<dbReference type="GO" id="GO:0005739">
    <property type="term" value="C:mitochondrion"/>
    <property type="evidence" value="ECO:0007669"/>
    <property type="project" value="UniProtKB-SubCell"/>
</dbReference>